<comment type="function">
    <text evidence="3">Catalytic component of the histone acetylase B (HAT-B) complex. Acetylates 'Lys-12' of histone H4 which is required for telomeric silencing. Has intrinsic substrate specificity that modifies lysine in recognition sequence GXGKXG. Involved in DNA double-strand break repair.</text>
</comment>
<comment type="catalytic activity">
    <reaction evidence="3">
        <text>L-lysyl-[protein] + acetyl-CoA = N(6)-acetyl-L-lysyl-[protein] + CoA + H(+)</text>
        <dbReference type="Rhea" id="RHEA:45948"/>
        <dbReference type="Rhea" id="RHEA-COMP:9752"/>
        <dbReference type="Rhea" id="RHEA-COMP:10731"/>
        <dbReference type="ChEBI" id="CHEBI:15378"/>
        <dbReference type="ChEBI" id="CHEBI:29969"/>
        <dbReference type="ChEBI" id="CHEBI:57287"/>
        <dbReference type="ChEBI" id="CHEBI:57288"/>
        <dbReference type="ChEBI" id="CHEBI:61930"/>
        <dbReference type="EC" id="2.3.1.48"/>
    </reaction>
</comment>
<comment type="subunit">
    <text evidence="3">Component of the HAT-B complex composed of at least hat1 and hat2. The HAT-B complex binds to histone H4 tail (By similarity).</text>
</comment>
<comment type="subcellular location">
    <subcellularLocation>
        <location evidence="1">Cytoplasm</location>
    </subcellularLocation>
    <subcellularLocation>
        <location evidence="1">Nucleus</location>
    </subcellularLocation>
</comment>
<comment type="similarity">
    <text evidence="5">Belongs to the HAT1 family.</text>
</comment>
<organism>
    <name type="scientific">Aspergillus fumigatus (strain ATCC MYA-4609 / CBS 101355 / FGSC A1100 / Af293)</name>
    <name type="common">Neosartorya fumigata</name>
    <dbReference type="NCBI Taxonomy" id="330879"/>
    <lineage>
        <taxon>Eukaryota</taxon>
        <taxon>Fungi</taxon>
        <taxon>Dikarya</taxon>
        <taxon>Ascomycota</taxon>
        <taxon>Pezizomycotina</taxon>
        <taxon>Eurotiomycetes</taxon>
        <taxon>Eurotiomycetidae</taxon>
        <taxon>Eurotiales</taxon>
        <taxon>Aspergillaceae</taxon>
        <taxon>Aspergillus</taxon>
        <taxon>Aspergillus subgen. Fumigati</taxon>
    </lineage>
</organism>
<feature type="chain" id="PRO_0000227717" description="Histone acetyltransferase type B catalytic subunit">
    <location>
        <begin position="1"/>
        <end position="570"/>
    </location>
</feature>
<feature type="region of interest" description="Interaction with histone H4 N-terminus" evidence="3">
    <location>
        <begin position="106"/>
        <end position="108"/>
    </location>
</feature>
<feature type="region of interest" description="Interaction with histone H4 N-terminus" evidence="3">
    <location>
        <begin position="272"/>
        <end position="274"/>
    </location>
</feature>
<feature type="region of interest" description="Disordered" evidence="4">
    <location>
        <begin position="522"/>
        <end position="570"/>
    </location>
</feature>
<feature type="compositionally biased region" description="Acidic residues" evidence="4">
    <location>
        <begin position="553"/>
        <end position="563"/>
    </location>
</feature>
<feature type="active site" description="Proton donor/acceptor" evidence="3">
    <location>
        <position position="347"/>
    </location>
</feature>
<feature type="binding site" evidence="3">
    <location>
        <begin position="312"/>
        <end position="314"/>
    </location>
    <ligand>
        <name>acetyl-CoA</name>
        <dbReference type="ChEBI" id="CHEBI:57288"/>
    </ligand>
</feature>
<feature type="binding site" evidence="3">
    <location>
        <begin position="319"/>
        <end position="325"/>
    </location>
    <ligand>
        <name>acetyl-CoA</name>
        <dbReference type="ChEBI" id="CHEBI:57288"/>
    </ligand>
</feature>
<feature type="site" description="Interaction with histone H4 N-terminus" evidence="2">
    <location>
        <position position="244"/>
    </location>
</feature>
<keyword id="KW-0012">Acyltransferase</keyword>
<keyword id="KW-0156">Chromatin regulator</keyword>
<keyword id="KW-0963">Cytoplasm</keyword>
<keyword id="KW-0227">DNA damage</keyword>
<keyword id="KW-0234">DNA repair</keyword>
<keyword id="KW-0539">Nucleus</keyword>
<keyword id="KW-1185">Reference proteome</keyword>
<keyword id="KW-0808">Transferase</keyword>
<reference key="1">
    <citation type="journal article" date="2005" name="Nature">
        <title>Genomic sequence of the pathogenic and allergenic filamentous fungus Aspergillus fumigatus.</title>
        <authorList>
            <person name="Nierman W.C."/>
            <person name="Pain A."/>
            <person name="Anderson M.J."/>
            <person name="Wortman J.R."/>
            <person name="Kim H.S."/>
            <person name="Arroyo J."/>
            <person name="Berriman M."/>
            <person name="Abe K."/>
            <person name="Archer D.B."/>
            <person name="Bermejo C."/>
            <person name="Bennett J.W."/>
            <person name="Bowyer P."/>
            <person name="Chen D."/>
            <person name="Collins M."/>
            <person name="Coulsen R."/>
            <person name="Davies R."/>
            <person name="Dyer P.S."/>
            <person name="Farman M.L."/>
            <person name="Fedorova N."/>
            <person name="Fedorova N.D."/>
            <person name="Feldblyum T.V."/>
            <person name="Fischer R."/>
            <person name="Fosker N."/>
            <person name="Fraser A."/>
            <person name="Garcia J.L."/>
            <person name="Garcia M.J."/>
            <person name="Goble A."/>
            <person name="Goldman G.H."/>
            <person name="Gomi K."/>
            <person name="Griffith-Jones S."/>
            <person name="Gwilliam R."/>
            <person name="Haas B.J."/>
            <person name="Haas H."/>
            <person name="Harris D.E."/>
            <person name="Horiuchi H."/>
            <person name="Huang J."/>
            <person name="Humphray S."/>
            <person name="Jimenez J."/>
            <person name="Keller N."/>
            <person name="Khouri H."/>
            <person name="Kitamoto K."/>
            <person name="Kobayashi T."/>
            <person name="Konzack S."/>
            <person name="Kulkarni R."/>
            <person name="Kumagai T."/>
            <person name="Lafton A."/>
            <person name="Latge J.-P."/>
            <person name="Li W."/>
            <person name="Lord A."/>
            <person name="Lu C."/>
            <person name="Majoros W.H."/>
            <person name="May G.S."/>
            <person name="Miller B.L."/>
            <person name="Mohamoud Y."/>
            <person name="Molina M."/>
            <person name="Monod M."/>
            <person name="Mouyna I."/>
            <person name="Mulligan S."/>
            <person name="Murphy L.D."/>
            <person name="O'Neil S."/>
            <person name="Paulsen I."/>
            <person name="Penalva M.A."/>
            <person name="Pertea M."/>
            <person name="Price C."/>
            <person name="Pritchard B.L."/>
            <person name="Quail M.A."/>
            <person name="Rabbinowitsch E."/>
            <person name="Rawlins N."/>
            <person name="Rajandream M.A."/>
            <person name="Reichard U."/>
            <person name="Renauld H."/>
            <person name="Robson G.D."/>
            <person name="Rodriguez de Cordoba S."/>
            <person name="Rodriguez-Pena J.M."/>
            <person name="Ronning C.M."/>
            <person name="Rutter S."/>
            <person name="Salzberg S.L."/>
            <person name="Sanchez M."/>
            <person name="Sanchez-Ferrero J.C."/>
            <person name="Saunders D."/>
            <person name="Seeger K."/>
            <person name="Squares R."/>
            <person name="Squares S."/>
            <person name="Takeuchi M."/>
            <person name="Tekaia F."/>
            <person name="Turner G."/>
            <person name="Vazquez de Aldana C.R."/>
            <person name="Weidman J."/>
            <person name="White O."/>
            <person name="Woodward J.R."/>
            <person name="Yu J.-H."/>
            <person name="Fraser C.M."/>
            <person name="Galagan J.E."/>
            <person name="Asai K."/>
            <person name="Machida M."/>
            <person name="Hall N."/>
            <person name="Barrell B.G."/>
            <person name="Denning D.W."/>
        </authorList>
    </citation>
    <scope>NUCLEOTIDE SEQUENCE [LARGE SCALE GENOMIC DNA]</scope>
    <source>
        <strain>ATCC MYA-4609 / CBS 101355 / FGSC A1100 / Af293</strain>
    </source>
</reference>
<accession>Q4X0W8</accession>
<evidence type="ECO:0000250" key="1"/>
<evidence type="ECO:0000250" key="2">
    <source>
        <dbReference type="UniProtKB" id="O14929"/>
    </source>
</evidence>
<evidence type="ECO:0000250" key="3">
    <source>
        <dbReference type="UniProtKB" id="Q12341"/>
    </source>
</evidence>
<evidence type="ECO:0000256" key="4">
    <source>
        <dbReference type="SAM" id="MobiDB-lite"/>
    </source>
</evidence>
<evidence type="ECO:0000305" key="5"/>
<dbReference type="EC" id="2.3.1.48" evidence="3"/>
<dbReference type="EMBL" id="AAHF01000001">
    <property type="protein sequence ID" value="EAL93497.1"/>
    <property type="molecule type" value="Genomic_DNA"/>
</dbReference>
<dbReference type="RefSeq" id="XP_755535.1">
    <property type="nucleotide sequence ID" value="XM_750442.1"/>
</dbReference>
<dbReference type="SMR" id="Q4X0W8"/>
<dbReference type="FunCoup" id="Q4X0W8">
    <property type="interactions" value="1153"/>
</dbReference>
<dbReference type="STRING" id="330879.Q4X0W8"/>
<dbReference type="EnsemblFungi" id="EAL93497">
    <property type="protein sequence ID" value="EAL93497"/>
    <property type="gene ID" value="AFUA_2G12030"/>
</dbReference>
<dbReference type="GeneID" id="3513677"/>
<dbReference type="KEGG" id="afm:AFUA_2G12030"/>
<dbReference type="VEuPathDB" id="FungiDB:Afu2g12030"/>
<dbReference type="eggNOG" id="KOG2696">
    <property type="taxonomic scope" value="Eukaryota"/>
</dbReference>
<dbReference type="HOGENOM" id="CLU_036024_2_1_1"/>
<dbReference type="InParanoid" id="Q4X0W8"/>
<dbReference type="OMA" id="WTCDAND"/>
<dbReference type="OrthoDB" id="10253098at2759"/>
<dbReference type="Proteomes" id="UP000002530">
    <property type="component" value="Chromosome 2"/>
</dbReference>
<dbReference type="GO" id="GO:0000781">
    <property type="term" value="C:chromosome, telomeric region"/>
    <property type="evidence" value="ECO:0007669"/>
    <property type="project" value="GOC"/>
</dbReference>
<dbReference type="GO" id="GO:0005737">
    <property type="term" value="C:cytoplasm"/>
    <property type="evidence" value="ECO:0007669"/>
    <property type="project" value="UniProtKB-SubCell"/>
</dbReference>
<dbReference type="GO" id="GO:0005634">
    <property type="term" value="C:nucleus"/>
    <property type="evidence" value="ECO:0007669"/>
    <property type="project" value="UniProtKB-SubCell"/>
</dbReference>
<dbReference type="GO" id="GO:0010485">
    <property type="term" value="F:histone H4 acetyltransferase activity"/>
    <property type="evidence" value="ECO:0000318"/>
    <property type="project" value="GO_Central"/>
</dbReference>
<dbReference type="GO" id="GO:0006281">
    <property type="term" value="P:DNA repair"/>
    <property type="evidence" value="ECO:0007669"/>
    <property type="project" value="UniProtKB-KW"/>
</dbReference>
<dbReference type="GO" id="GO:0031509">
    <property type="term" value="P:subtelomeric heterochromatin formation"/>
    <property type="evidence" value="ECO:0007669"/>
    <property type="project" value="InterPro"/>
</dbReference>
<dbReference type="FunFam" id="3.40.630.30:FF:000125">
    <property type="entry name" value="Histone acetyltransferase type B catalytic subunit"/>
    <property type="match status" value="1"/>
</dbReference>
<dbReference type="Gene3D" id="3.40.630.30">
    <property type="match status" value="1"/>
</dbReference>
<dbReference type="Gene3D" id="3.90.360.10">
    <property type="entry name" value="Histone acetyl transferase 1 (HAT1), N-terminal domain"/>
    <property type="match status" value="1"/>
</dbReference>
<dbReference type="InterPro" id="IPR016181">
    <property type="entry name" value="Acyl_CoA_acyltransferase"/>
</dbReference>
<dbReference type="InterPro" id="IPR019467">
    <property type="entry name" value="Hat1_N"/>
</dbReference>
<dbReference type="InterPro" id="IPR037113">
    <property type="entry name" value="Hat1_N_sf"/>
</dbReference>
<dbReference type="InterPro" id="IPR017380">
    <property type="entry name" value="Hist_AcTrfase_B-typ_cat-su"/>
</dbReference>
<dbReference type="PANTHER" id="PTHR12046">
    <property type="entry name" value="HISTONE ACETYLTRANSFERASE TYPE B CATALYTIC SUBUNIT"/>
    <property type="match status" value="1"/>
</dbReference>
<dbReference type="Pfam" id="PF10394">
    <property type="entry name" value="Hat1_N"/>
    <property type="match status" value="1"/>
</dbReference>
<dbReference type="PIRSF" id="PIRSF038084">
    <property type="entry name" value="HAT-B_cat"/>
    <property type="match status" value="1"/>
</dbReference>
<dbReference type="SUPFAM" id="SSF55729">
    <property type="entry name" value="Acyl-CoA N-acyltransferases (Nat)"/>
    <property type="match status" value="1"/>
</dbReference>
<protein>
    <recommendedName>
        <fullName>Histone acetyltransferase type B catalytic subunit</fullName>
        <ecNumber evidence="3">2.3.1.48</ecNumber>
    </recommendedName>
</protein>
<gene>
    <name type="primary">hat1</name>
    <name type="ORF">AFUA_2G12030</name>
</gene>
<sequence>MALILERLYLLSSPRNAIIRNTRSEAGRELIFSFGLPSLSLPSCIASQYGKRRRLYFTTQLHVNSFLHWTCDANDAVNITLVQPDEQKLKTVSSFHPQFTYPIFGDDERIFGYKGLIIRLRFAAHDLRPQLHISYDEKFKPVEDIAAVDIPKTLKPWIPEDAFVTLPDYEKAVLEDKAAKDFKPPGKLVHCYVSRNRNFEIWAGSLADPEVRRLLDRAQIFVSLFIEAGTPLATDDPEWTLQRWTVYFVYEIVKPPTPTASKYSIVGYATTYRWWHYRRDRTQVPVVKNDPFPSGPEIHPSQLPSRLRIAQFLILPPHQNSGHGRHLYTAIHSACVQDPSVVELTVEDPNEAFDVLRDSADYHILRPEFIKHEVNINPDPYEAHSRNQRPRRVPTAALIPVKLLHDIRTSYKIDSTQFAHILEMFLLSQIPLKNRHAGGANMSRLLIKKHRAEDPNERRYYWWRMLTKQRLYKRSKDILIQLDLDERIQKLEETVSNVEEGYEVLLKEFSEREEKLKARGVVESPAATVSDDASAGPSGTSRDQRVKRKFTVEDDEDKVEEEDTAKRTKV</sequence>
<name>HAT1_ASPFU</name>
<proteinExistence type="inferred from homology"/>